<proteinExistence type="inferred from homology"/>
<dbReference type="EC" id="3.1.26.4" evidence="1"/>
<dbReference type="EMBL" id="AP008937">
    <property type="protein sequence ID" value="BAG26861.1"/>
    <property type="molecule type" value="Genomic_DNA"/>
</dbReference>
<dbReference type="RefSeq" id="WP_012390974.1">
    <property type="nucleotide sequence ID" value="NC_010610.1"/>
</dbReference>
<dbReference type="SMR" id="B2GB29"/>
<dbReference type="KEGG" id="lfe:LAF_0525"/>
<dbReference type="PATRIC" id="fig|334390.5.peg.569"/>
<dbReference type="eggNOG" id="COG1039">
    <property type="taxonomic scope" value="Bacteria"/>
</dbReference>
<dbReference type="HOGENOM" id="CLU_059546_1_0_9"/>
<dbReference type="Proteomes" id="UP000001697">
    <property type="component" value="Chromosome"/>
</dbReference>
<dbReference type="GO" id="GO:0005737">
    <property type="term" value="C:cytoplasm"/>
    <property type="evidence" value="ECO:0007669"/>
    <property type="project" value="UniProtKB-SubCell"/>
</dbReference>
<dbReference type="GO" id="GO:0032299">
    <property type="term" value="C:ribonuclease H2 complex"/>
    <property type="evidence" value="ECO:0007669"/>
    <property type="project" value="TreeGrafter"/>
</dbReference>
<dbReference type="GO" id="GO:0000287">
    <property type="term" value="F:magnesium ion binding"/>
    <property type="evidence" value="ECO:0007669"/>
    <property type="project" value="UniProtKB-UniRule"/>
</dbReference>
<dbReference type="GO" id="GO:0003723">
    <property type="term" value="F:RNA binding"/>
    <property type="evidence" value="ECO:0007669"/>
    <property type="project" value="InterPro"/>
</dbReference>
<dbReference type="GO" id="GO:0004523">
    <property type="term" value="F:RNA-DNA hybrid ribonuclease activity"/>
    <property type="evidence" value="ECO:0007669"/>
    <property type="project" value="UniProtKB-UniRule"/>
</dbReference>
<dbReference type="GO" id="GO:0043137">
    <property type="term" value="P:DNA replication, removal of RNA primer"/>
    <property type="evidence" value="ECO:0007669"/>
    <property type="project" value="TreeGrafter"/>
</dbReference>
<dbReference type="GO" id="GO:0006298">
    <property type="term" value="P:mismatch repair"/>
    <property type="evidence" value="ECO:0007669"/>
    <property type="project" value="TreeGrafter"/>
</dbReference>
<dbReference type="CDD" id="cd06590">
    <property type="entry name" value="RNase_HII_bacteria_HIII_like"/>
    <property type="match status" value="1"/>
</dbReference>
<dbReference type="CDD" id="cd14796">
    <property type="entry name" value="RNAse_HIII_N"/>
    <property type="match status" value="1"/>
</dbReference>
<dbReference type="FunFam" id="3.30.420.10:FF:000047">
    <property type="entry name" value="Ribonuclease HIII"/>
    <property type="match status" value="1"/>
</dbReference>
<dbReference type="Gene3D" id="3.30.420.10">
    <property type="entry name" value="Ribonuclease H-like superfamily/Ribonuclease H"/>
    <property type="match status" value="1"/>
</dbReference>
<dbReference type="Gene3D" id="3.30.310.10">
    <property type="entry name" value="TATA-Binding Protein"/>
    <property type="match status" value="1"/>
</dbReference>
<dbReference type="HAMAP" id="MF_00053">
    <property type="entry name" value="RNase_HIII"/>
    <property type="match status" value="1"/>
</dbReference>
<dbReference type="InterPro" id="IPR001352">
    <property type="entry name" value="RNase_HII/HIII"/>
</dbReference>
<dbReference type="InterPro" id="IPR024567">
    <property type="entry name" value="RNase_HII/HIII_dom"/>
</dbReference>
<dbReference type="InterPro" id="IPR004641">
    <property type="entry name" value="RNase_HIII"/>
</dbReference>
<dbReference type="InterPro" id="IPR024568">
    <property type="entry name" value="RNase_HIII_N"/>
</dbReference>
<dbReference type="InterPro" id="IPR012337">
    <property type="entry name" value="RNaseH-like_sf"/>
</dbReference>
<dbReference type="InterPro" id="IPR036397">
    <property type="entry name" value="RNaseH_sf"/>
</dbReference>
<dbReference type="InterPro" id="IPR012295">
    <property type="entry name" value="TBP_dom_sf"/>
</dbReference>
<dbReference type="NCBIfam" id="TIGR00716">
    <property type="entry name" value="rnhC"/>
    <property type="match status" value="1"/>
</dbReference>
<dbReference type="PANTHER" id="PTHR10954:SF23">
    <property type="entry name" value="RIBONUCLEASE"/>
    <property type="match status" value="1"/>
</dbReference>
<dbReference type="PANTHER" id="PTHR10954">
    <property type="entry name" value="RIBONUCLEASE H2 SUBUNIT A"/>
    <property type="match status" value="1"/>
</dbReference>
<dbReference type="Pfam" id="PF11858">
    <property type="entry name" value="DUF3378"/>
    <property type="match status" value="1"/>
</dbReference>
<dbReference type="Pfam" id="PF01351">
    <property type="entry name" value="RNase_HII"/>
    <property type="match status" value="1"/>
</dbReference>
<dbReference type="PIRSF" id="PIRSF037748">
    <property type="entry name" value="RnhC"/>
    <property type="match status" value="1"/>
</dbReference>
<dbReference type="SUPFAM" id="SSF53098">
    <property type="entry name" value="Ribonuclease H-like"/>
    <property type="match status" value="1"/>
</dbReference>
<dbReference type="PROSITE" id="PS51975">
    <property type="entry name" value="RNASE_H_2"/>
    <property type="match status" value="1"/>
</dbReference>
<gene>
    <name evidence="1" type="primary">rnhC</name>
    <name type="ordered locus">LAF_0525</name>
</gene>
<comment type="function">
    <text evidence="1">Endonuclease that specifically degrades the RNA of RNA-DNA hybrids.</text>
</comment>
<comment type="catalytic activity">
    <reaction evidence="1">
        <text>Endonucleolytic cleavage to 5'-phosphomonoester.</text>
        <dbReference type="EC" id="3.1.26.4"/>
    </reaction>
</comment>
<comment type="cofactor">
    <cofactor evidence="1">
        <name>Mn(2+)</name>
        <dbReference type="ChEBI" id="CHEBI:29035"/>
    </cofactor>
    <cofactor evidence="1">
        <name>Mg(2+)</name>
        <dbReference type="ChEBI" id="CHEBI:18420"/>
    </cofactor>
    <text evidence="1">Manganese or magnesium. Binds 1 divalent metal ion per monomer in the absence of substrate. May bind a second metal ion after substrate binding.</text>
</comment>
<comment type="subcellular location">
    <subcellularLocation>
        <location evidence="1">Cytoplasm</location>
    </subcellularLocation>
</comment>
<comment type="similarity">
    <text evidence="1">Belongs to the RNase HII family. RnhC subfamily.</text>
</comment>
<name>RNH3_LIMF3</name>
<organism>
    <name type="scientific">Limosilactobacillus fermentum (strain NBRC 3956 / LMG 18251)</name>
    <name type="common">Lactobacillus fermentum</name>
    <dbReference type="NCBI Taxonomy" id="334390"/>
    <lineage>
        <taxon>Bacteria</taxon>
        <taxon>Bacillati</taxon>
        <taxon>Bacillota</taxon>
        <taxon>Bacilli</taxon>
        <taxon>Lactobacillales</taxon>
        <taxon>Lactobacillaceae</taxon>
        <taxon>Limosilactobacillus</taxon>
    </lineage>
</organism>
<feature type="chain" id="PRO_1000091677" description="Ribonuclease HIII">
    <location>
        <begin position="1"/>
        <end position="301"/>
    </location>
</feature>
<feature type="domain" description="RNase H type-2" evidence="2">
    <location>
        <begin position="88"/>
        <end position="301"/>
    </location>
</feature>
<feature type="binding site" evidence="1">
    <location>
        <position position="94"/>
    </location>
    <ligand>
        <name>a divalent metal cation</name>
        <dbReference type="ChEBI" id="CHEBI:60240"/>
    </ligand>
</feature>
<feature type="binding site" evidence="1">
    <location>
        <position position="95"/>
    </location>
    <ligand>
        <name>a divalent metal cation</name>
        <dbReference type="ChEBI" id="CHEBI:60240"/>
    </ligand>
</feature>
<feature type="binding site" evidence="1">
    <location>
        <position position="197"/>
    </location>
    <ligand>
        <name>a divalent metal cation</name>
        <dbReference type="ChEBI" id="CHEBI:60240"/>
    </ligand>
</feature>
<reference key="1">
    <citation type="journal article" date="2008" name="DNA Res.">
        <title>Comparative genome analysis of Lactobacillus reuteri and Lactobacillus fermentum reveal a genomic island for reuterin and cobalamin production.</title>
        <authorList>
            <person name="Morita H."/>
            <person name="Toh H."/>
            <person name="Fukuda S."/>
            <person name="Horikawa H."/>
            <person name="Oshima K."/>
            <person name="Suzuki T."/>
            <person name="Murakami M."/>
            <person name="Hisamatsu S."/>
            <person name="Kato Y."/>
            <person name="Takizawa T."/>
            <person name="Fukuoka H."/>
            <person name="Yoshimura T."/>
            <person name="Itoh K."/>
            <person name="O'Sullivan D.J."/>
            <person name="McKay L.L."/>
            <person name="Ohno H."/>
            <person name="Kikuchi J."/>
            <person name="Masaoka T."/>
            <person name="Hattori M."/>
        </authorList>
    </citation>
    <scope>NUCLEOTIDE SEQUENCE [LARGE SCALE GENOMIC DNA]</scope>
    <source>
        <strain>NBRC 3956 / LMG 18251</strain>
    </source>
</reference>
<protein>
    <recommendedName>
        <fullName evidence="1">Ribonuclease HIII</fullName>
        <shortName evidence="1">RNase HIII</shortName>
        <ecNumber evidence="1">3.1.26.4</ecNumber>
    </recommendedName>
</protein>
<sequence>MNIVINVDTPTFEQMKSTYQAPGTLPAGAAFHAKLKGVTVTGYTKSHKVMFQGALANQEAARWQPNDAPAPSRSTPAPAGLPAGFATWSVLGSDEVGVGSYFGPLTTAAVFVAADQVASLTQLGVADSKKLTDPEIIRLAKQIMATCPVTYLNLMPAAYNARMKKYNQAQLKALCHNYVLAKTLERLATKPQAILIDQFVSERTYFNYLQGQPQIVSHHVYFQTKGEQAHVAVAAASIVARYQSLKAMDTLSEQAGITLPIGAGHAVDLIAAKLIRKGLDLNQFAKVHFANTQKARQLARQ</sequence>
<evidence type="ECO:0000255" key="1">
    <source>
        <dbReference type="HAMAP-Rule" id="MF_00053"/>
    </source>
</evidence>
<evidence type="ECO:0000255" key="2">
    <source>
        <dbReference type="PROSITE-ProRule" id="PRU01319"/>
    </source>
</evidence>
<keyword id="KW-0963">Cytoplasm</keyword>
<keyword id="KW-0255">Endonuclease</keyword>
<keyword id="KW-0378">Hydrolase</keyword>
<keyword id="KW-0460">Magnesium</keyword>
<keyword id="KW-0479">Metal-binding</keyword>
<keyword id="KW-0540">Nuclease</keyword>
<keyword id="KW-1185">Reference proteome</keyword>
<accession>B2GB29</accession>